<keyword id="KW-0903">Direct protein sequencing</keyword>
<keyword id="KW-0325">Glycoprotein</keyword>
<keyword id="KW-0964">Secreted</keyword>
<keyword id="KW-0732">Signal</keyword>
<proteinExistence type="evidence at protein level"/>
<sequence length="388" mass="43708">MKIFLCLIAVVSLQGVLAYDIEREYAWKNISFEGIDPASYSVKNSIVTGFAHDADSKKIFITIPRLNPVPITLTELDTTKHPEGSPPLSKFPGSDKLISVYQPVIDECRRLWIVDAGQVEYKGDEQKIPKKNAAIIAYDLTKDNYPEIDRYEIPNNVAGNPLGFGGFAVDVTNPKEGCGKTFVYITNFEDNTLIVYDQEKKDSWKISHDSFKPEHESILTHNGAQHILKLGIFGITLGDLDEEGNRQAYYLGGSSTKLFRVNTKDLKKKAGQIEFTPLGDRGSHSEALALAYDPKTKVIFFIEYNSKRISCWNTQKSLNPDNIDVIYHSPDFIFGTDISMDSESKLWFFSNGHPPIENVQLTFDKPHFRLISMDTKKSIHGTKCEVKP</sequence>
<feature type="signal peptide" evidence="2">
    <location>
        <begin position="1"/>
        <end position="18"/>
    </location>
</feature>
<feature type="chain" id="PRO_5004179485" description="Yellow-related salivary protein SP03" evidence="5">
    <location>
        <begin position="19"/>
        <end position="388"/>
    </location>
</feature>
<feature type="glycosylation site" description="N-linked (GlcNAc...) asparagine" evidence="1">
    <location>
        <position position="29"/>
    </location>
</feature>
<organism>
    <name type="scientific">Phlebotomus perniciosus</name>
    <name type="common">Phlebotomine sand fly</name>
    <dbReference type="NCBI Taxonomy" id="13204"/>
    <lineage>
        <taxon>Eukaryota</taxon>
        <taxon>Metazoa</taxon>
        <taxon>Ecdysozoa</taxon>
        <taxon>Arthropoda</taxon>
        <taxon>Hexapoda</taxon>
        <taxon>Insecta</taxon>
        <taxon>Pterygota</taxon>
        <taxon>Neoptera</taxon>
        <taxon>Endopterygota</taxon>
        <taxon>Diptera</taxon>
        <taxon>Nematocera</taxon>
        <taxon>Psychodoidea</taxon>
        <taxon>Psychodidae</taxon>
        <taxon>Phlebotomus</taxon>
        <taxon>Larroussius</taxon>
    </lineage>
</organism>
<name>SP03_PHLPE</name>
<dbReference type="EMBL" id="DQ150621">
    <property type="protein sequence ID" value="ABA43049.1"/>
    <property type="molecule type" value="mRNA"/>
</dbReference>
<dbReference type="SMR" id="Q0ZS88"/>
<dbReference type="GO" id="GO:0005576">
    <property type="term" value="C:extracellular region"/>
    <property type="evidence" value="ECO:0007669"/>
    <property type="project" value="UniProtKB-SubCell"/>
</dbReference>
<dbReference type="Gene3D" id="2.120.10.30">
    <property type="entry name" value="TolB, C-terminal domain"/>
    <property type="match status" value="1"/>
</dbReference>
<dbReference type="InterPro" id="IPR011042">
    <property type="entry name" value="6-blade_b-propeller_TolB-like"/>
</dbReference>
<dbReference type="InterPro" id="IPR017996">
    <property type="entry name" value="Royal_jelly/protein_yellow"/>
</dbReference>
<dbReference type="PANTHER" id="PTHR10009">
    <property type="entry name" value="PROTEIN YELLOW-RELATED"/>
    <property type="match status" value="1"/>
</dbReference>
<dbReference type="PANTHER" id="PTHR10009:SF11">
    <property type="entry name" value="RH54244P"/>
    <property type="match status" value="1"/>
</dbReference>
<dbReference type="Pfam" id="PF03022">
    <property type="entry name" value="MRJP"/>
    <property type="match status" value="1"/>
</dbReference>
<dbReference type="SUPFAM" id="SSF75011">
    <property type="entry name" value="3-carboxy-cis,cis-mucoante lactonizing enzyme"/>
    <property type="match status" value="1"/>
</dbReference>
<accession>Q0ZS88</accession>
<reference evidence="6" key="1">
    <citation type="journal article" date="2006" name="BMC Genomics">
        <title>Comparative salivary gland transcriptomics of sandfly vectors of visceral leishmaniasis.</title>
        <authorList>
            <person name="Anderson J.M."/>
            <person name="Oliveira F."/>
            <person name="Kamhawi S."/>
            <person name="Mans B.J."/>
            <person name="Reynoso D."/>
            <person name="Seitz A.E."/>
            <person name="Lawyer P."/>
            <person name="Garfield M."/>
            <person name="Pham M."/>
            <person name="Valenzuela J.G."/>
        </authorList>
    </citation>
    <scope>NUCLEOTIDE SEQUENCE [LARGE SCALE MRNA]</scope>
    <scope>PROTEIN SEQUENCE OF 19-38</scope>
    <scope>TISSUE SPECIFICITY</scope>
    <source>
        <tissue evidence="4">Salivary gland</tissue>
    </source>
</reference>
<reference evidence="5" key="2">
    <citation type="journal article" date="2019" name="Insect Biochem. Mol. Biol.">
        <title>Amine-binding properties of salivary yellow-related proteins in phlebotomine sand flies.</title>
        <authorList>
            <person name="Sumova P."/>
            <person name="Sima M."/>
            <person name="Kalouskova B."/>
            <person name="Polanska N."/>
            <person name="Vanek O."/>
            <person name="Oliveira F."/>
            <person name="Valenzuela J.G."/>
            <person name="Volf P."/>
        </authorList>
    </citation>
    <scope>FUNCTION</scope>
</reference>
<comment type="function">
    <text evidence="3 5">Probably modulates blood feeding of sand flies on vertebrate species by binding and sequestering different mediators involved in the host response (Probable). Binds biogenic amines (PubMed:31604119). Binds noradrenaline with medium affinity (PubMed:31604119). Binds octopamine with low affinity (PubMed:31604119). Poorly binds histamine, adrenaline and serotonin (PubMed:31604119).</text>
</comment>
<comment type="subcellular location">
    <subcellularLocation>
        <location evidence="5">Secreted</location>
    </subcellularLocation>
</comment>
<comment type="tissue specificity">
    <text evidence="2">Female salivary gland (at protein level).</text>
</comment>
<comment type="similarity">
    <text evidence="5">Belongs to the major royal jelly protein family.</text>
</comment>
<evidence type="ECO:0000255" key="1">
    <source>
        <dbReference type="PROSITE-ProRule" id="PRU00498"/>
    </source>
</evidence>
<evidence type="ECO:0000269" key="2">
    <source>
    </source>
</evidence>
<evidence type="ECO:0000269" key="3">
    <source>
    </source>
</evidence>
<evidence type="ECO:0000303" key="4">
    <source>
    </source>
</evidence>
<evidence type="ECO:0000305" key="5"/>
<evidence type="ECO:0000312" key="6">
    <source>
        <dbReference type="EMBL" id="ABA43049.1"/>
    </source>
</evidence>
<protein>
    <recommendedName>
        <fullName evidence="5">Yellow-related salivary protein SP03</fullName>
    </recommendedName>
    <alternativeName>
        <fullName evidence="4">PpeSP03</fullName>
    </alternativeName>
</protein>